<comment type="function">
    <text evidence="1">May contribute to the regulation of cell proliferation.</text>
</comment>
<comment type="subcellular location">
    <subcellularLocation>
        <location evidence="1">Cytoplasm</location>
    </subcellularLocation>
    <subcellularLocation>
        <location evidence="1">Nucleus</location>
    </subcellularLocation>
    <subcellularLocation>
        <location evidence="1">Mitochondrion</location>
    </subcellularLocation>
</comment>
<comment type="tissue specificity">
    <text evidence="3">Detected in liver (at protein level).</text>
</comment>
<comment type="miscellaneous">
    <text>This protein is coded from a FGF2 (BFGF) gene antisense transcript.</text>
</comment>
<comment type="similarity">
    <text evidence="4">Belongs to the Nudix hydrolase family.</text>
</comment>
<name>NUDT6_XENLA</name>
<sequence>MQSRLISIAASEGFTFHHAERNESTLTLWLKDGPSKLPGYATHQVGVAGAVLDEDNGKVLVVQDRNKTVNAWKFPGGLSDQGEDIGATAVREVLEETGIHSEFKSLLSIRQQHNHPGAFGKSDLYIICRLKPLSYTINFCHQECLKCEWMDLQELAYCSNTTIITSRVAKLLLYGYNEGFHLVDLTMRTFPAVYSGLFYSLYHKELPETYEGSATLL</sequence>
<protein>
    <recommendedName>
        <fullName>Nucleoside diphosphate-linked moiety X motif 6</fullName>
        <shortName>Nudix motif 6</shortName>
        <ecNumber>3.6.1.-</ecNumber>
    </recommendedName>
    <alternativeName>
        <fullName>Protein GFG</fullName>
    </alternativeName>
</protein>
<feature type="chain" id="PRO_0000057110" description="Nucleoside diphosphate-linked moiety X motif 6">
    <location>
        <begin position="1"/>
        <end position="217"/>
    </location>
</feature>
<feature type="domain" description="Nudix hydrolase" evidence="2">
    <location>
        <begin position="42"/>
        <end position="177"/>
    </location>
</feature>
<feature type="short sequence motif" description="Nudix box">
    <location>
        <begin position="77"/>
        <end position="98"/>
    </location>
</feature>
<proteinExistence type="evidence at protein level"/>
<gene>
    <name type="primary">nudt6</name>
</gene>
<keyword id="KW-0963">Cytoplasm</keyword>
<keyword id="KW-0378">Hydrolase</keyword>
<keyword id="KW-0496">Mitochondrion</keyword>
<keyword id="KW-0539">Nucleus</keyword>
<keyword id="KW-1185">Reference proteome</keyword>
<dbReference type="EC" id="3.6.1.-"/>
<dbReference type="EMBL" id="X16627">
    <property type="protein sequence ID" value="CAA34623.1"/>
    <property type="molecule type" value="mRNA"/>
</dbReference>
<dbReference type="RefSeq" id="XP_018124454.1">
    <property type="nucleotide sequence ID" value="XM_018268965.1"/>
</dbReference>
<dbReference type="SMR" id="P13420"/>
<dbReference type="DNASU" id="380230"/>
<dbReference type="GeneID" id="380230"/>
<dbReference type="AGR" id="Xenbase:XB-GENE-865534"/>
<dbReference type="CTD" id="380230"/>
<dbReference type="Xenbase" id="XB-GENE-865534">
    <property type="gene designation" value="nudt6.L"/>
</dbReference>
<dbReference type="OrthoDB" id="447842at2759"/>
<dbReference type="Proteomes" id="UP000186698">
    <property type="component" value="Chromosome 1L"/>
</dbReference>
<dbReference type="Bgee" id="380230">
    <property type="expression patterns" value="Expressed in neurula embryo and 19 other cell types or tissues"/>
</dbReference>
<dbReference type="GO" id="GO:0005739">
    <property type="term" value="C:mitochondrion"/>
    <property type="evidence" value="ECO:0007669"/>
    <property type="project" value="UniProtKB-SubCell"/>
</dbReference>
<dbReference type="GO" id="GO:0005634">
    <property type="term" value="C:nucleus"/>
    <property type="evidence" value="ECO:0007669"/>
    <property type="project" value="UniProtKB-SubCell"/>
</dbReference>
<dbReference type="GO" id="GO:0047631">
    <property type="term" value="F:ADP-ribose diphosphatase activity"/>
    <property type="evidence" value="ECO:0000318"/>
    <property type="project" value="GO_Central"/>
</dbReference>
<dbReference type="GO" id="GO:0051287">
    <property type="term" value="F:NAD binding"/>
    <property type="evidence" value="ECO:0000318"/>
    <property type="project" value="GO_Central"/>
</dbReference>
<dbReference type="GO" id="GO:0035529">
    <property type="term" value="F:NADH pyrophosphatase activity"/>
    <property type="evidence" value="ECO:0000318"/>
    <property type="project" value="GO_Central"/>
</dbReference>
<dbReference type="CDD" id="cd04670">
    <property type="entry name" value="NUDIX_ASFGF2_Nudt6"/>
    <property type="match status" value="1"/>
</dbReference>
<dbReference type="FunFam" id="3.90.79.10:FF:000027">
    <property type="entry name" value="nucleoside diphosphate-linked moiety X motif 6"/>
    <property type="match status" value="1"/>
</dbReference>
<dbReference type="Gene3D" id="3.40.630.30">
    <property type="match status" value="1"/>
</dbReference>
<dbReference type="Gene3D" id="4.10.80.100">
    <property type="match status" value="1"/>
</dbReference>
<dbReference type="Gene3D" id="3.90.79.10">
    <property type="entry name" value="Nucleoside Triphosphate Pyrophosphohydrolase"/>
    <property type="match status" value="1"/>
</dbReference>
<dbReference type="InterPro" id="IPR015797">
    <property type="entry name" value="NUDIX_hydrolase-like_dom_sf"/>
</dbReference>
<dbReference type="InterPro" id="IPR003293">
    <property type="entry name" value="Nudix_hydrolase6-like"/>
</dbReference>
<dbReference type="InterPro" id="IPR020084">
    <property type="entry name" value="NUDIX_hydrolase_CS"/>
</dbReference>
<dbReference type="InterPro" id="IPR000086">
    <property type="entry name" value="NUDIX_hydrolase_dom"/>
</dbReference>
<dbReference type="InterPro" id="IPR040618">
    <property type="entry name" value="Pre-Nudix"/>
</dbReference>
<dbReference type="PANTHER" id="PTHR13994:SF46">
    <property type="entry name" value="NUCLEOSIDE DIPHOSPHATE-LINKED MOIETY X MOTIF 6"/>
    <property type="match status" value="1"/>
</dbReference>
<dbReference type="PANTHER" id="PTHR13994">
    <property type="entry name" value="NUDIX HYDROLASE RELATED"/>
    <property type="match status" value="1"/>
</dbReference>
<dbReference type="Pfam" id="PF00293">
    <property type="entry name" value="NUDIX"/>
    <property type="match status" value="1"/>
</dbReference>
<dbReference type="Pfam" id="PF18290">
    <property type="entry name" value="Nudix_hydro"/>
    <property type="match status" value="1"/>
</dbReference>
<dbReference type="PRINTS" id="PR01356">
    <property type="entry name" value="GFGPROTEIN"/>
</dbReference>
<dbReference type="SUPFAM" id="SSF55811">
    <property type="entry name" value="Nudix"/>
    <property type="match status" value="1"/>
</dbReference>
<dbReference type="PROSITE" id="PS51462">
    <property type="entry name" value="NUDIX"/>
    <property type="match status" value="1"/>
</dbReference>
<dbReference type="PROSITE" id="PS00893">
    <property type="entry name" value="NUDIX_BOX"/>
    <property type="match status" value="1"/>
</dbReference>
<organism>
    <name type="scientific">Xenopus laevis</name>
    <name type="common">African clawed frog</name>
    <dbReference type="NCBI Taxonomy" id="8355"/>
    <lineage>
        <taxon>Eukaryota</taxon>
        <taxon>Metazoa</taxon>
        <taxon>Chordata</taxon>
        <taxon>Craniata</taxon>
        <taxon>Vertebrata</taxon>
        <taxon>Euteleostomi</taxon>
        <taxon>Amphibia</taxon>
        <taxon>Batrachia</taxon>
        <taxon>Anura</taxon>
        <taxon>Pipoidea</taxon>
        <taxon>Pipidae</taxon>
        <taxon>Xenopodinae</taxon>
        <taxon>Xenopus</taxon>
        <taxon>Xenopus</taxon>
    </lineage>
</organism>
<accession>P13420</accession>
<reference key="1">
    <citation type="journal article" date="1989" name="EMBO J.">
        <title>An antisense transcript from the Xenopus laevis bFGF gene coding for an evolutionarily conserved 24 kd protein.</title>
        <authorList>
            <person name="Volk R."/>
            <person name="Koester M."/>
            <person name="Poeting A."/>
            <person name="Hartmann L."/>
            <person name="Knoechel W."/>
        </authorList>
    </citation>
    <scope>NUCLEOTIDE SEQUENCE [MRNA]</scope>
    <source>
        <tissue>Oocyte</tissue>
    </source>
</reference>
<reference key="2">
    <citation type="journal article" date="1996" name="Biochem. Biophys. Res. Commun.">
        <title>The basic fibroblast growth factor (FGF-2) antisense RNA (GFG) is translated into a MutT-related protein in vivo.</title>
        <authorList>
            <person name="Li A.W."/>
            <person name="Too C.K."/>
            <person name="Murphy P.R."/>
        </authorList>
    </citation>
    <scope>TISSUE SPECIFICITY</scope>
</reference>
<evidence type="ECO:0000250" key="1"/>
<evidence type="ECO:0000255" key="2">
    <source>
        <dbReference type="PROSITE-ProRule" id="PRU00794"/>
    </source>
</evidence>
<evidence type="ECO:0000269" key="3">
    <source>
    </source>
</evidence>
<evidence type="ECO:0000305" key="4"/>